<sequence>MFKRTIPLFAAFTLAISPSIFPNYAHAQEDKPKTNQYWWPKMLDLSPLRQPNATSNPMGEKFNYAEEFNSLDLNAVIEDLKKLMTTSQDWWPADYGNYGPLFIRMSWHAAGTYRIYDGRGGANGGFQRFAPQNSWPDNANLDKARRLLWPIKQKYGRKISWADLLVLAGNVAMESMGFKTIGFAGGREDAWEAININWGPEGKWLESKRQDKDGKLEKPLAATVMGLIYVNPEGPNGVPDPLAAAEKIRETFGRMAMNDEETVALIAGGHAFGKTHGAASGKYLGPAPEAAGIEEQGFGWKNSYGSGKGKDTITSGLEGAWTVTPTHWSHNYLQNLFNFNWVKTKSPGGAIQWVPENSNASSMVPDAFDPSKRHAPVMLTTDLALKFDPVYSKIAKRFLDNPKEFDDAFARAWFKLIHRDMGPRSRYLGSLVPKEAMIWQDPVPPVDYKLVDANDIANLKGKILNSGLTTSELVKTAWASASTFRGTDMRGGANGARIRLAPQKDWPANDPQELAKVLKTLESIQNNFNNAQADGKKISLADLIVLGGNAAIEQAAKQAGYDIIVPFTPGRTDATQGMTDVKSFEVLEPKADGFRNYFDKSNNMSPPEMLVEKASLLKLSVPEMTVLVGGMRVLNANTGQNQYGVFTDKPGTLNNDFFINLLSMSTEWKKSSETEGIYEGYERKTGKLKWKATSVDLIFGANSELRAVAEAYATDDAKEKFIQDFINAWVKVMTADRFDIKAANANINS</sequence>
<organism>
    <name type="scientific">Legionella pneumophila</name>
    <dbReference type="NCBI Taxonomy" id="446"/>
    <lineage>
        <taxon>Bacteria</taxon>
        <taxon>Pseudomonadati</taxon>
        <taxon>Pseudomonadota</taxon>
        <taxon>Gammaproteobacteria</taxon>
        <taxon>Legionellales</taxon>
        <taxon>Legionellaceae</taxon>
        <taxon>Legionella</taxon>
    </lineage>
</organism>
<protein>
    <recommendedName>
        <fullName evidence="1">Catalase-peroxidase 2</fullName>
        <shortName evidence="1">CP 2</shortName>
        <ecNumber evidence="1">1.11.1.21</ecNumber>
    </recommendedName>
    <alternativeName>
        <fullName evidence="1">Peroxidase/catalase 2</fullName>
    </alternativeName>
</protein>
<gene>
    <name evidence="1" type="primary">katG2</name>
    <name type="synonym">katA</name>
</gene>
<feature type="signal peptide" evidence="1">
    <location>
        <begin position="1"/>
        <end position="27"/>
    </location>
</feature>
<feature type="chain" id="PRO_0000055569" description="Catalase-peroxidase 2">
    <location>
        <begin position="28"/>
        <end position="749"/>
    </location>
</feature>
<feature type="active site" description="Proton acceptor" evidence="1">
    <location>
        <position position="108"/>
    </location>
</feature>
<feature type="binding site" description="axial binding residue" evidence="1">
    <location>
        <position position="270"/>
    </location>
    <ligand>
        <name>heme b</name>
        <dbReference type="ChEBI" id="CHEBI:60344"/>
    </ligand>
    <ligandPart>
        <name>Fe</name>
        <dbReference type="ChEBI" id="CHEBI:18248"/>
    </ligandPart>
</feature>
<feature type="site" description="Transition state stabilizer" evidence="1">
    <location>
        <position position="104"/>
    </location>
</feature>
<feature type="cross-link" description="Tryptophyl-tyrosyl-methioninium (Trp-Tyr) (with M-255)" evidence="1">
    <location>
        <begin position="107"/>
        <end position="229"/>
    </location>
</feature>
<feature type="cross-link" description="Tryptophyl-tyrosyl-methioninium (Tyr-Met) (with W-107)" evidence="1">
    <location>
        <begin position="229"/>
        <end position="255"/>
    </location>
</feature>
<keyword id="KW-0349">Heme</keyword>
<keyword id="KW-0376">Hydrogen peroxide</keyword>
<keyword id="KW-0408">Iron</keyword>
<keyword id="KW-0479">Metal-binding</keyword>
<keyword id="KW-0560">Oxidoreductase</keyword>
<keyword id="KW-0574">Periplasm</keyword>
<keyword id="KW-0575">Peroxidase</keyword>
<keyword id="KW-0732">Signal</keyword>
<name>KATG2_LEGPN</name>
<dbReference type="EC" id="1.11.1.21" evidence="1"/>
<dbReference type="EMBL" id="AF276752">
    <property type="protein sequence ID" value="AAG37106.1"/>
    <property type="molecule type" value="Genomic_DNA"/>
</dbReference>
<dbReference type="EMBL" id="AB017595">
    <property type="protein sequence ID" value="BAA78342.1"/>
    <property type="molecule type" value="Genomic_DNA"/>
</dbReference>
<dbReference type="SMR" id="Q9WXB9"/>
<dbReference type="STRING" id="91892.BIZ52_01265"/>
<dbReference type="eggNOG" id="COG0376">
    <property type="taxonomic scope" value="Bacteria"/>
</dbReference>
<dbReference type="GO" id="GO:0005829">
    <property type="term" value="C:cytosol"/>
    <property type="evidence" value="ECO:0007669"/>
    <property type="project" value="TreeGrafter"/>
</dbReference>
<dbReference type="GO" id="GO:0042597">
    <property type="term" value="C:periplasmic space"/>
    <property type="evidence" value="ECO:0007669"/>
    <property type="project" value="UniProtKB-SubCell"/>
</dbReference>
<dbReference type="GO" id="GO:0004096">
    <property type="term" value="F:catalase activity"/>
    <property type="evidence" value="ECO:0007669"/>
    <property type="project" value="UniProtKB-UniRule"/>
</dbReference>
<dbReference type="GO" id="GO:0020037">
    <property type="term" value="F:heme binding"/>
    <property type="evidence" value="ECO:0007669"/>
    <property type="project" value="InterPro"/>
</dbReference>
<dbReference type="GO" id="GO:0046872">
    <property type="term" value="F:metal ion binding"/>
    <property type="evidence" value="ECO:0007669"/>
    <property type="project" value="UniProtKB-KW"/>
</dbReference>
<dbReference type="GO" id="GO:0070301">
    <property type="term" value="P:cellular response to hydrogen peroxide"/>
    <property type="evidence" value="ECO:0007669"/>
    <property type="project" value="TreeGrafter"/>
</dbReference>
<dbReference type="GO" id="GO:0042744">
    <property type="term" value="P:hydrogen peroxide catabolic process"/>
    <property type="evidence" value="ECO:0007669"/>
    <property type="project" value="UniProtKB-KW"/>
</dbReference>
<dbReference type="CDD" id="cd00649">
    <property type="entry name" value="catalase_peroxidase_1"/>
    <property type="match status" value="1"/>
</dbReference>
<dbReference type="CDD" id="cd08200">
    <property type="entry name" value="catalase_peroxidase_2"/>
    <property type="match status" value="1"/>
</dbReference>
<dbReference type="FunFam" id="1.10.420.10:FF:000002">
    <property type="entry name" value="Catalase-peroxidase"/>
    <property type="match status" value="1"/>
</dbReference>
<dbReference type="FunFam" id="1.10.420.10:FF:000004">
    <property type="entry name" value="Catalase-peroxidase"/>
    <property type="match status" value="1"/>
</dbReference>
<dbReference type="FunFam" id="1.10.520.10:FF:000002">
    <property type="entry name" value="Catalase-peroxidase"/>
    <property type="match status" value="1"/>
</dbReference>
<dbReference type="Gene3D" id="1.10.520.10">
    <property type="match status" value="2"/>
</dbReference>
<dbReference type="Gene3D" id="1.10.420.10">
    <property type="entry name" value="Peroxidase, domain 2"/>
    <property type="match status" value="2"/>
</dbReference>
<dbReference type="HAMAP" id="MF_01961">
    <property type="entry name" value="Catal_peroxid"/>
    <property type="match status" value="1"/>
</dbReference>
<dbReference type="InterPro" id="IPR000763">
    <property type="entry name" value="Catalase_peroxidase"/>
</dbReference>
<dbReference type="InterPro" id="IPR002016">
    <property type="entry name" value="Haem_peroxidase"/>
</dbReference>
<dbReference type="InterPro" id="IPR010255">
    <property type="entry name" value="Haem_peroxidase_sf"/>
</dbReference>
<dbReference type="InterPro" id="IPR019794">
    <property type="entry name" value="Peroxidases_AS"/>
</dbReference>
<dbReference type="InterPro" id="IPR019793">
    <property type="entry name" value="Peroxidases_heam-ligand_BS"/>
</dbReference>
<dbReference type="NCBIfam" id="TIGR00198">
    <property type="entry name" value="cat_per_HPI"/>
    <property type="match status" value="1"/>
</dbReference>
<dbReference type="NCBIfam" id="NF011635">
    <property type="entry name" value="PRK15061.1"/>
    <property type="match status" value="1"/>
</dbReference>
<dbReference type="PANTHER" id="PTHR30555:SF0">
    <property type="entry name" value="CATALASE-PEROXIDASE"/>
    <property type="match status" value="1"/>
</dbReference>
<dbReference type="PANTHER" id="PTHR30555">
    <property type="entry name" value="HYDROPEROXIDASE I, BIFUNCTIONAL CATALASE-PEROXIDASE"/>
    <property type="match status" value="1"/>
</dbReference>
<dbReference type="Pfam" id="PF00141">
    <property type="entry name" value="peroxidase"/>
    <property type="match status" value="2"/>
</dbReference>
<dbReference type="PRINTS" id="PR00460">
    <property type="entry name" value="BPEROXIDASE"/>
</dbReference>
<dbReference type="PRINTS" id="PR00458">
    <property type="entry name" value="PEROXIDASE"/>
</dbReference>
<dbReference type="SUPFAM" id="SSF48113">
    <property type="entry name" value="Heme-dependent peroxidases"/>
    <property type="match status" value="2"/>
</dbReference>
<dbReference type="PROSITE" id="PS00435">
    <property type="entry name" value="PEROXIDASE_1"/>
    <property type="match status" value="1"/>
</dbReference>
<dbReference type="PROSITE" id="PS00436">
    <property type="entry name" value="PEROXIDASE_2"/>
    <property type="match status" value="1"/>
</dbReference>
<dbReference type="PROSITE" id="PS50873">
    <property type="entry name" value="PEROXIDASE_4"/>
    <property type="match status" value="1"/>
</dbReference>
<evidence type="ECO:0000255" key="1">
    <source>
        <dbReference type="HAMAP-Rule" id="MF_01961"/>
    </source>
</evidence>
<evidence type="ECO:0000269" key="2">
    <source>
    </source>
</evidence>
<comment type="function">
    <text evidence="1 2">Bifunctional enzyme with both catalase and broad-spectrum peroxidase activity. Important for stationary phase survival.</text>
</comment>
<comment type="catalytic activity">
    <reaction evidence="1">
        <text>H2O2 + AH2 = A + 2 H2O</text>
        <dbReference type="Rhea" id="RHEA:30275"/>
        <dbReference type="ChEBI" id="CHEBI:13193"/>
        <dbReference type="ChEBI" id="CHEBI:15377"/>
        <dbReference type="ChEBI" id="CHEBI:16240"/>
        <dbReference type="ChEBI" id="CHEBI:17499"/>
        <dbReference type="EC" id="1.11.1.21"/>
    </reaction>
</comment>
<comment type="catalytic activity">
    <reaction evidence="1">
        <text>2 H2O2 = O2 + 2 H2O</text>
        <dbReference type="Rhea" id="RHEA:20309"/>
        <dbReference type="ChEBI" id="CHEBI:15377"/>
        <dbReference type="ChEBI" id="CHEBI:15379"/>
        <dbReference type="ChEBI" id="CHEBI:16240"/>
        <dbReference type="EC" id="1.11.1.21"/>
    </reaction>
</comment>
<comment type="cofactor">
    <cofactor evidence="1">
        <name>heme b</name>
        <dbReference type="ChEBI" id="CHEBI:60344"/>
    </cofactor>
    <text evidence="1">Binds 1 heme b (iron(II)-protoporphyrin IX) group per dimer.</text>
</comment>
<comment type="subunit">
    <text evidence="1">Homodimer or homotetramer.</text>
</comment>
<comment type="subcellular location">
    <subcellularLocation>
        <location evidence="2">Periplasm</location>
    </subcellularLocation>
</comment>
<comment type="induction">
    <text evidence="2">Induced during exponential growth and is the predominant peroxidase in stationary phase.</text>
</comment>
<comment type="PTM">
    <text evidence="1">Formation of the three residue Trp-Tyr-Met cross-link is important for the catalase, but not the peroxidase activity of the enzyme.</text>
</comment>
<comment type="similarity">
    <text evidence="1">Belongs to the peroxidase family. Peroxidase/catalase subfamily.</text>
</comment>
<reference key="1">
    <citation type="journal article" date="2000" name="J. Bacteriol.">
        <title>Catalase-peroxidases of Legionella pneumophila: cloning of the katA gene and studies of KatA function.</title>
        <authorList>
            <person name="Bandyopadhyay P."/>
            <person name="Steinman H.M."/>
        </authorList>
    </citation>
    <scope>NUCLEOTIDE SEQUENCE [GENOMIC DNA]</scope>
    <scope>FUNCTION</scope>
    <scope>INDUCTION</scope>
    <scope>SUBCELLULAR LOCATION</scope>
    <source>
        <strain>JR32</strain>
    </source>
</reference>
<reference key="2">
    <citation type="submission" date="1998-09" db="EMBL/GenBank/DDBJ databases">
        <title>Legionella pneumophila catalase-peroxidase gene.</title>
        <authorList>
            <person name="Amemura-Maekawa J."/>
            <person name="Watanabe H."/>
        </authorList>
    </citation>
    <scope>NUCLEOTIDE SEQUENCE [GENOMIC DNA]</scope>
    <source>
        <strain>AM511</strain>
    </source>
</reference>
<accession>Q9WXB9</accession>
<accession>Q548R8</accession>
<proteinExistence type="evidence at transcript level"/>